<feature type="chain" id="PRO_1000184300" description="ATP synthase subunit c">
    <location>
        <begin position="1"/>
        <end position="81"/>
    </location>
</feature>
<feature type="transmembrane region" description="Helical" evidence="1">
    <location>
        <begin position="7"/>
        <end position="27"/>
    </location>
</feature>
<feature type="transmembrane region" description="Helical" evidence="1">
    <location>
        <begin position="55"/>
        <end position="75"/>
    </location>
</feature>
<feature type="site" description="Reversibly protonated during proton transport" evidence="1">
    <location>
        <position position="60"/>
    </location>
</feature>
<gene>
    <name evidence="1" type="primary">atpE</name>
    <name type="ordered locus">ACIAD0182</name>
</gene>
<accession>Q6FFK5</accession>
<sequence length="81" mass="8360">MELTLGLVAIASAILIAFGALGTAIGFGLLGGRFLEAVARQPELAPQLQTRMFLIAGLLDAVPMIGVGIGLFFIFANPFVG</sequence>
<comment type="function">
    <text evidence="1">F(1)F(0) ATP synthase produces ATP from ADP in the presence of a proton or sodium gradient. F-type ATPases consist of two structural domains, F(1) containing the extramembraneous catalytic core and F(0) containing the membrane proton channel, linked together by a central stalk and a peripheral stalk. During catalysis, ATP synthesis in the catalytic domain of F(1) is coupled via a rotary mechanism of the central stalk subunits to proton translocation.</text>
</comment>
<comment type="function">
    <text evidence="1">Key component of the F(0) channel; it plays a direct role in translocation across the membrane. A homomeric c-ring of between 10-14 subunits forms the central stalk rotor element with the F(1) delta and epsilon subunits.</text>
</comment>
<comment type="subunit">
    <text evidence="1">F-type ATPases have 2 components, F(1) - the catalytic core - and F(0) - the membrane proton channel. F(1) has five subunits: alpha(3), beta(3), gamma(1), delta(1), epsilon(1). F(0) has three main subunits: a(1), b(2) and c(10-14). The alpha and beta chains form an alternating ring which encloses part of the gamma chain. F(1) is attached to F(0) by a central stalk formed by the gamma and epsilon chains, while a peripheral stalk is formed by the delta and b chains.</text>
</comment>
<comment type="subcellular location">
    <subcellularLocation>
        <location evidence="1">Cell inner membrane</location>
        <topology evidence="1">Multi-pass membrane protein</topology>
    </subcellularLocation>
</comment>
<comment type="similarity">
    <text evidence="1">Belongs to the ATPase C chain family.</text>
</comment>
<name>ATPL_ACIAD</name>
<dbReference type="EMBL" id="CR543861">
    <property type="protein sequence ID" value="CAG67152.1"/>
    <property type="molecule type" value="Genomic_DNA"/>
</dbReference>
<dbReference type="RefSeq" id="WP_000424060.1">
    <property type="nucleotide sequence ID" value="NC_005966.1"/>
</dbReference>
<dbReference type="SMR" id="Q6FFK5"/>
<dbReference type="STRING" id="202950.GCA_001485005_01912"/>
<dbReference type="GeneID" id="97424931"/>
<dbReference type="KEGG" id="aci:ACIAD0182"/>
<dbReference type="eggNOG" id="ENOG5032S3K">
    <property type="taxonomic scope" value="Bacteria"/>
</dbReference>
<dbReference type="HOGENOM" id="CLU_148047_1_0_6"/>
<dbReference type="OrthoDB" id="9811659at2"/>
<dbReference type="BioCyc" id="ASP62977:ACIAD_RS00840-MONOMER"/>
<dbReference type="Proteomes" id="UP000000430">
    <property type="component" value="Chromosome"/>
</dbReference>
<dbReference type="GO" id="GO:0005886">
    <property type="term" value="C:plasma membrane"/>
    <property type="evidence" value="ECO:0007669"/>
    <property type="project" value="UniProtKB-SubCell"/>
</dbReference>
<dbReference type="GO" id="GO:0045259">
    <property type="term" value="C:proton-transporting ATP synthase complex"/>
    <property type="evidence" value="ECO:0007669"/>
    <property type="project" value="UniProtKB-KW"/>
</dbReference>
<dbReference type="GO" id="GO:0033177">
    <property type="term" value="C:proton-transporting two-sector ATPase complex, proton-transporting domain"/>
    <property type="evidence" value="ECO:0007669"/>
    <property type="project" value="InterPro"/>
</dbReference>
<dbReference type="GO" id="GO:0008289">
    <property type="term" value="F:lipid binding"/>
    <property type="evidence" value="ECO:0007669"/>
    <property type="project" value="UniProtKB-KW"/>
</dbReference>
<dbReference type="GO" id="GO:0046933">
    <property type="term" value="F:proton-transporting ATP synthase activity, rotational mechanism"/>
    <property type="evidence" value="ECO:0007669"/>
    <property type="project" value="UniProtKB-UniRule"/>
</dbReference>
<dbReference type="CDD" id="cd18185">
    <property type="entry name" value="ATP-synt_Fo_c_ATPE"/>
    <property type="match status" value="1"/>
</dbReference>
<dbReference type="FunFam" id="1.20.20.10:FF:000002">
    <property type="entry name" value="ATP synthase subunit c"/>
    <property type="match status" value="1"/>
</dbReference>
<dbReference type="Gene3D" id="1.20.20.10">
    <property type="entry name" value="F1F0 ATP synthase subunit C"/>
    <property type="match status" value="1"/>
</dbReference>
<dbReference type="HAMAP" id="MF_01396">
    <property type="entry name" value="ATP_synth_c_bact"/>
    <property type="match status" value="1"/>
</dbReference>
<dbReference type="InterPro" id="IPR005953">
    <property type="entry name" value="ATP_synth_csu_bac/chlpt"/>
</dbReference>
<dbReference type="InterPro" id="IPR000454">
    <property type="entry name" value="ATP_synth_F0_csu"/>
</dbReference>
<dbReference type="InterPro" id="IPR020537">
    <property type="entry name" value="ATP_synth_F0_csu_DDCD_BS"/>
</dbReference>
<dbReference type="InterPro" id="IPR038662">
    <property type="entry name" value="ATP_synth_F0_csu_sf"/>
</dbReference>
<dbReference type="InterPro" id="IPR002379">
    <property type="entry name" value="ATPase_proteolipid_c-like_dom"/>
</dbReference>
<dbReference type="InterPro" id="IPR035921">
    <property type="entry name" value="F/V-ATP_Csub_sf"/>
</dbReference>
<dbReference type="NCBIfam" id="TIGR01260">
    <property type="entry name" value="ATP_synt_c"/>
    <property type="match status" value="1"/>
</dbReference>
<dbReference type="NCBIfam" id="NF005363">
    <property type="entry name" value="PRK06876.1"/>
    <property type="match status" value="1"/>
</dbReference>
<dbReference type="Pfam" id="PF00137">
    <property type="entry name" value="ATP-synt_C"/>
    <property type="match status" value="1"/>
</dbReference>
<dbReference type="PRINTS" id="PR00124">
    <property type="entry name" value="ATPASEC"/>
</dbReference>
<dbReference type="SUPFAM" id="SSF81333">
    <property type="entry name" value="F1F0 ATP synthase subunit C"/>
    <property type="match status" value="1"/>
</dbReference>
<dbReference type="PROSITE" id="PS00605">
    <property type="entry name" value="ATPASE_C"/>
    <property type="match status" value="1"/>
</dbReference>
<keyword id="KW-0066">ATP synthesis</keyword>
<keyword id="KW-0997">Cell inner membrane</keyword>
<keyword id="KW-1003">Cell membrane</keyword>
<keyword id="KW-0138">CF(0)</keyword>
<keyword id="KW-0375">Hydrogen ion transport</keyword>
<keyword id="KW-0406">Ion transport</keyword>
<keyword id="KW-0446">Lipid-binding</keyword>
<keyword id="KW-0472">Membrane</keyword>
<keyword id="KW-0812">Transmembrane</keyword>
<keyword id="KW-1133">Transmembrane helix</keyword>
<keyword id="KW-0813">Transport</keyword>
<reference key="1">
    <citation type="journal article" date="2004" name="Nucleic Acids Res.">
        <title>Unique features revealed by the genome sequence of Acinetobacter sp. ADP1, a versatile and naturally transformation competent bacterium.</title>
        <authorList>
            <person name="Barbe V."/>
            <person name="Vallenet D."/>
            <person name="Fonknechten N."/>
            <person name="Kreimeyer A."/>
            <person name="Oztas S."/>
            <person name="Labarre L."/>
            <person name="Cruveiller S."/>
            <person name="Robert C."/>
            <person name="Duprat S."/>
            <person name="Wincker P."/>
            <person name="Ornston L.N."/>
            <person name="Weissenbach J."/>
            <person name="Marliere P."/>
            <person name="Cohen G.N."/>
            <person name="Medigue C."/>
        </authorList>
    </citation>
    <scope>NUCLEOTIDE SEQUENCE [LARGE SCALE GENOMIC DNA]</scope>
    <source>
        <strain>ATCC 33305 / BD413 / ADP1</strain>
    </source>
</reference>
<proteinExistence type="inferred from homology"/>
<protein>
    <recommendedName>
        <fullName evidence="1">ATP synthase subunit c</fullName>
    </recommendedName>
    <alternativeName>
        <fullName evidence="1">ATP synthase F(0) sector subunit c</fullName>
    </alternativeName>
    <alternativeName>
        <fullName evidence="1">F-type ATPase subunit c</fullName>
        <shortName evidence="1">F-ATPase subunit c</shortName>
    </alternativeName>
    <alternativeName>
        <fullName evidence="1">Lipid-binding protein</fullName>
    </alternativeName>
</protein>
<organism>
    <name type="scientific">Acinetobacter baylyi (strain ATCC 33305 / BD413 / ADP1)</name>
    <dbReference type="NCBI Taxonomy" id="62977"/>
    <lineage>
        <taxon>Bacteria</taxon>
        <taxon>Pseudomonadati</taxon>
        <taxon>Pseudomonadota</taxon>
        <taxon>Gammaproteobacteria</taxon>
        <taxon>Moraxellales</taxon>
        <taxon>Moraxellaceae</taxon>
        <taxon>Acinetobacter</taxon>
    </lineage>
</organism>
<evidence type="ECO:0000255" key="1">
    <source>
        <dbReference type="HAMAP-Rule" id="MF_01396"/>
    </source>
</evidence>